<comment type="function">
    <text evidence="1">Endonuclease that resolves Holliday junction intermediates made during homologous genetic recombination and DNA repair. Exhibits sequence and structure-selective cleavage of four-way DNA junctions, where it introduces symmetrical nicks in two strands of the same polarity at the 5' side of CC dinucleotides. Corrects the defects in genetic recombination and DNA repair associated with inactivation of RuvAB or RuvC (By similarity).</text>
</comment>
<comment type="catalytic activity">
    <reaction>
        <text>Endonucleolytic cleavage at a junction such as a reciprocal single-stranded crossover between two homologous DNA duplexes (Holliday junction).</text>
        <dbReference type="EC" id="3.1.21.10"/>
    </reaction>
</comment>
<comment type="cofactor">
    <cofactor evidence="1">
        <name>Mg(2+)</name>
        <dbReference type="ChEBI" id="CHEBI:18420"/>
    </cofactor>
    <text evidence="1">Binds 1 Mg(2+) ion per subunit.</text>
</comment>
<comment type="subunit">
    <text evidence="1">Homodimer.</text>
</comment>
<comment type="similarity">
    <text evidence="2">Belongs to the RusA family.</text>
</comment>
<evidence type="ECO:0000250" key="1"/>
<evidence type="ECO:0000305" key="2"/>
<accession>A7ZJG7</accession>
<proteinExistence type="inferred from homology"/>
<sequence length="120" mass="13791">MNTYSITLPWPPSNNRYYRHNRGRTHVSAEGQAYRDNVARIIKNAMLDIGLAMPVKIRIECHMPDRCRRDLDNLQKAAFDALTKAGFWLDDELVVDYRVVKMPVTKGGKLELTITELGDE</sequence>
<feature type="chain" id="PRO_0000324834" description="Crossover junction endodeoxyribonuclease RusA">
    <location>
        <begin position="1"/>
        <end position="120"/>
    </location>
</feature>
<feature type="region of interest" description="DNA-binding" evidence="1">
    <location>
        <begin position="13"/>
        <end position="16"/>
    </location>
</feature>
<feature type="region of interest" description="DNA-binding" evidence="1">
    <location>
        <begin position="66"/>
        <end position="73"/>
    </location>
</feature>
<feature type="binding site" evidence="1">
    <location>
        <position position="70"/>
    </location>
    <ligand>
        <name>Mg(2+)</name>
        <dbReference type="ChEBI" id="CHEBI:18420"/>
    </ligand>
</feature>
<feature type="binding site" evidence="1">
    <location>
        <position position="72"/>
    </location>
    <ligand>
        <name>Mg(2+)</name>
        <dbReference type="ChEBI" id="CHEBI:18420"/>
    </ligand>
</feature>
<feature type="binding site" evidence="1">
    <location>
        <position position="91"/>
    </location>
    <ligand>
        <name>Mg(2+)</name>
        <dbReference type="ChEBI" id="CHEBI:18420"/>
    </ligand>
</feature>
<keyword id="KW-0227">DNA damage</keyword>
<keyword id="KW-0233">DNA recombination</keyword>
<keyword id="KW-0234">DNA repair</keyword>
<keyword id="KW-0255">Endonuclease</keyword>
<keyword id="KW-0378">Hydrolase</keyword>
<keyword id="KW-0460">Magnesium</keyword>
<keyword id="KW-0479">Metal-binding</keyword>
<keyword id="KW-0540">Nuclease</keyword>
<keyword id="KW-1185">Reference proteome</keyword>
<reference key="1">
    <citation type="journal article" date="2008" name="J. Bacteriol.">
        <title>The pangenome structure of Escherichia coli: comparative genomic analysis of E. coli commensal and pathogenic isolates.</title>
        <authorList>
            <person name="Rasko D.A."/>
            <person name="Rosovitz M.J."/>
            <person name="Myers G.S.A."/>
            <person name="Mongodin E.F."/>
            <person name="Fricke W.F."/>
            <person name="Gajer P."/>
            <person name="Crabtree J."/>
            <person name="Sebaihia M."/>
            <person name="Thomson N.R."/>
            <person name="Chaudhuri R."/>
            <person name="Henderson I.R."/>
            <person name="Sperandio V."/>
            <person name="Ravel J."/>
        </authorList>
    </citation>
    <scope>NUCLEOTIDE SEQUENCE [LARGE SCALE GENOMIC DNA]</scope>
    <source>
        <strain>E24377A / ETEC</strain>
    </source>
</reference>
<dbReference type="EC" id="3.1.21.10"/>
<dbReference type="EMBL" id="CP000800">
    <property type="protein sequence ID" value="ABV20145.1"/>
    <property type="molecule type" value="Genomic_DNA"/>
</dbReference>
<dbReference type="RefSeq" id="WP_001099708.1">
    <property type="nucleotide sequence ID" value="NC_009801.1"/>
</dbReference>
<dbReference type="SMR" id="A7ZJG7"/>
<dbReference type="KEGG" id="ecw:EcE24377A_0821"/>
<dbReference type="HOGENOM" id="CLU_139466_0_2_6"/>
<dbReference type="Proteomes" id="UP000001122">
    <property type="component" value="Chromosome"/>
</dbReference>
<dbReference type="GO" id="GO:0008821">
    <property type="term" value="F:crossover junction DNA endonuclease activity"/>
    <property type="evidence" value="ECO:0007669"/>
    <property type="project" value="InterPro"/>
</dbReference>
<dbReference type="GO" id="GO:0000287">
    <property type="term" value="F:magnesium ion binding"/>
    <property type="evidence" value="ECO:0007669"/>
    <property type="project" value="InterPro"/>
</dbReference>
<dbReference type="GO" id="GO:0006310">
    <property type="term" value="P:DNA recombination"/>
    <property type="evidence" value="ECO:0007669"/>
    <property type="project" value="UniProtKB-KW"/>
</dbReference>
<dbReference type="GO" id="GO:0006281">
    <property type="term" value="P:DNA repair"/>
    <property type="evidence" value="ECO:0007669"/>
    <property type="project" value="UniProtKB-KW"/>
</dbReference>
<dbReference type="FunFam" id="3.30.1330.70:FF:000001">
    <property type="entry name" value="Crossover junction endodeoxyribonuclease RusA"/>
    <property type="match status" value="1"/>
</dbReference>
<dbReference type="Gene3D" id="3.30.1330.70">
    <property type="entry name" value="Holliday junction resolvase RusA"/>
    <property type="match status" value="1"/>
</dbReference>
<dbReference type="InterPro" id="IPR016281">
    <property type="entry name" value="Endonuclease_RusA"/>
</dbReference>
<dbReference type="InterPro" id="IPR008822">
    <property type="entry name" value="Endonuclease_RusA-like"/>
</dbReference>
<dbReference type="InterPro" id="IPR036614">
    <property type="entry name" value="RusA-like_sf"/>
</dbReference>
<dbReference type="NCBIfam" id="NF007305">
    <property type="entry name" value="PRK09786.1"/>
    <property type="match status" value="1"/>
</dbReference>
<dbReference type="Pfam" id="PF05866">
    <property type="entry name" value="RusA"/>
    <property type="match status" value="1"/>
</dbReference>
<dbReference type="PIRSF" id="PIRSF001007">
    <property type="entry name" value="RusA"/>
    <property type="match status" value="1"/>
</dbReference>
<dbReference type="SUPFAM" id="SSF103084">
    <property type="entry name" value="Holliday junction resolvase RusA"/>
    <property type="match status" value="1"/>
</dbReference>
<name>RUSA_ECO24</name>
<organism>
    <name type="scientific">Escherichia coli O139:H28 (strain E24377A / ETEC)</name>
    <dbReference type="NCBI Taxonomy" id="331111"/>
    <lineage>
        <taxon>Bacteria</taxon>
        <taxon>Pseudomonadati</taxon>
        <taxon>Pseudomonadota</taxon>
        <taxon>Gammaproteobacteria</taxon>
        <taxon>Enterobacterales</taxon>
        <taxon>Enterobacteriaceae</taxon>
        <taxon>Escherichia</taxon>
    </lineage>
</organism>
<protein>
    <recommendedName>
        <fullName>Crossover junction endodeoxyribonuclease RusA</fullName>
        <ecNumber>3.1.21.10</ecNumber>
    </recommendedName>
    <alternativeName>
        <fullName>Holliday junction nuclease RusA</fullName>
    </alternativeName>
    <alternativeName>
        <fullName>Holliday junction resolvase</fullName>
    </alternativeName>
</protein>
<gene>
    <name type="primary">rusA</name>
    <name type="ordered locus">EcE24377A_0821</name>
</gene>